<protein>
    <recommendedName>
        <fullName evidence="1">tRNA uridine 5-carboxymethylaminomethyl modification enzyme MnmG</fullName>
    </recommendedName>
    <alternativeName>
        <fullName evidence="1">Glucose-inhibited division protein A</fullName>
    </alternativeName>
</protein>
<comment type="function">
    <text evidence="1">NAD-binding protein involved in the addition of a carboxymethylaminomethyl (cmnm) group at the wobble position (U34) of certain tRNAs, forming tRNA-cmnm(5)s(2)U34.</text>
</comment>
<comment type="cofactor">
    <cofactor evidence="1">
        <name>FAD</name>
        <dbReference type="ChEBI" id="CHEBI:57692"/>
    </cofactor>
</comment>
<comment type="subunit">
    <text evidence="1">Homodimer. Heterotetramer of two MnmE and two MnmG subunits.</text>
</comment>
<comment type="subcellular location">
    <subcellularLocation>
        <location evidence="1">Cytoplasm</location>
    </subcellularLocation>
</comment>
<comment type="similarity">
    <text evidence="1">Belongs to the MnmG family.</text>
</comment>
<keyword id="KW-0963">Cytoplasm</keyword>
<keyword id="KW-0274">FAD</keyword>
<keyword id="KW-0285">Flavoprotein</keyword>
<keyword id="KW-0520">NAD</keyword>
<keyword id="KW-0819">tRNA processing</keyword>
<sequence>MFYPDPFDVIIIGGGHAGTEAAMAAARMGQQTLLLTHNIDTLGQMSCNPAIGGIGKGHLVKEVDALGGLMAKAIDQAGIQFRILNASKGPAVRATRAQADRVLYRQAVRTALENQPNLMIFQQAVEDLIVENDRVVGAVTQMGLKFRAKAVVLTVGTFLDGKIHIGLDNYSGGRAGDPPSIPLSRRLRELPLRVGRLKTGTPPRIDARTIDFSVLAQQHGDNPMPVFSFMGNASQHPQQVPCYITHTNEKTHDVIRSNLDRSPMYAGVIEGVGPRYCPSIEDKVMRFADRNQHQIFLEPEGLTSNEIYPNGISTSLPFDVQMQIVRSMQGMENAKIVRPGYAIEYDFFDPRDLKPTLESKFIQGLFFAGQINGTTGYEEAAAQGLLAGLNAARLSADKEGWAPARSQAYLGVLVDDLCTLGTKEPYRMFTSRAEYRLMLREDNADLRLTEIGRELGLVDDERWARFNEKLENIERERQRLKSTWVTPSAEAAAEVNAHLTAPLSREASGEDLLRRPEMTYEKLTTLTPFAPALTDEQAAEQVEIQVKYEGYIARQQDEIEKQLRNENTLLPATLDYRQVSGLSNEVIAKLNDHKPASIGQASRISGVTPAAISILLVWLKKQGMLRRSA</sequence>
<accession>Q31UP0</accession>
<reference key="1">
    <citation type="journal article" date="2005" name="Nucleic Acids Res.">
        <title>Genome dynamics and diversity of Shigella species, the etiologic agents of bacillary dysentery.</title>
        <authorList>
            <person name="Yang F."/>
            <person name="Yang J."/>
            <person name="Zhang X."/>
            <person name="Chen L."/>
            <person name="Jiang Y."/>
            <person name="Yan Y."/>
            <person name="Tang X."/>
            <person name="Wang J."/>
            <person name="Xiong Z."/>
            <person name="Dong J."/>
            <person name="Xue Y."/>
            <person name="Zhu Y."/>
            <person name="Xu X."/>
            <person name="Sun L."/>
            <person name="Chen S."/>
            <person name="Nie H."/>
            <person name="Peng J."/>
            <person name="Xu J."/>
            <person name="Wang Y."/>
            <person name="Yuan Z."/>
            <person name="Wen Y."/>
            <person name="Yao Z."/>
            <person name="Shen Y."/>
            <person name="Qiang B."/>
            <person name="Hou Y."/>
            <person name="Yu J."/>
            <person name="Jin Q."/>
        </authorList>
    </citation>
    <scope>NUCLEOTIDE SEQUENCE [LARGE SCALE GENOMIC DNA]</scope>
    <source>
        <strain>Sb227</strain>
    </source>
</reference>
<evidence type="ECO:0000255" key="1">
    <source>
        <dbReference type="HAMAP-Rule" id="MF_00129"/>
    </source>
</evidence>
<name>MNMG_SHIBS</name>
<gene>
    <name evidence="1" type="primary">mnmG</name>
    <name evidence="1" type="synonym">gidA</name>
    <name type="ordered locus">SBO_3746</name>
</gene>
<dbReference type="EMBL" id="CP000036">
    <property type="protein sequence ID" value="ABB68218.1"/>
    <property type="molecule type" value="Genomic_DNA"/>
</dbReference>
<dbReference type="RefSeq" id="WP_000499788.1">
    <property type="nucleotide sequence ID" value="NC_007613.1"/>
</dbReference>
<dbReference type="SMR" id="Q31UP0"/>
<dbReference type="GeneID" id="75205459"/>
<dbReference type="KEGG" id="sbo:SBO_3746"/>
<dbReference type="HOGENOM" id="CLU_007831_2_2_6"/>
<dbReference type="Proteomes" id="UP000007067">
    <property type="component" value="Chromosome"/>
</dbReference>
<dbReference type="GO" id="GO:0005829">
    <property type="term" value="C:cytosol"/>
    <property type="evidence" value="ECO:0007669"/>
    <property type="project" value="TreeGrafter"/>
</dbReference>
<dbReference type="GO" id="GO:0050660">
    <property type="term" value="F:flavin adenine dinucleotide binding"/>
    <property type="evidence" value="ECO:0007669"/>
    <property type="project" value="UniProtKB-UniRule"/>
</dbReference>
<dbReference type="GO" id="GO:0030488">
    <property type="term" value="P:tRNA methylation"/>
    <property type="evidence" value="ECO:0007669"/>
    <property type="project" value="TreeGrafter"/>
</dbReference>
<dbReference type="GO" id="GO:0002098">
    <property type="term" value="P:tRNA wobble uridine modification"/>
    <property type="evidence" value="ECO:0007669"/>
    <property type="project" value="InterPro"/>
</dbReference>
<dbReference type="FunFam" id="1.10.10.1800:FF:000001">
    <property type="entry name" value="tRNA uridine 5-carboxymethylaminomethyl modification enzyme MnmG"/>
    <property type="match status" value="1"/>
</dbReference>
<dbReference type="FunFam" id="1.10.150.570:FF:000001">
    <property type="entry name" value="tRNA uridine 5-carboxymethylaminomethyl modification enzyme MnmG"/>
    <property type="match status" value="1"/>
</dbReference>
<dbReference type="FunFam" id="3.50.50.60:FF:000002">
    <property type="entry name" value="tRNA uridine 5-carboxymethylaminomethyl modification enzyme MnmG"/>
    <property type="match status" value="1"/>
</dbReference>
<dbReference type="FunFam" id="3.50.50.60:FF:000010">
    <property type="entry name" value="tRNA uridine 5-carboxymethylaminomethyl modification enzyme MnmG"/>
    <property type="match status" value="1"/>
</dbReference>
<dbReference type="Gene3D" id="3.50.50.60">
    <property type="entry name" value="FAD/NAD(P)-binding domain"/>
    <property type="match status" value="2"/>
</dbReference>
<dbReference type="Gene3D" id="1.10.150.570">
    <property type="entry name" value="GidA associated domain, C-terminal subdomain"/>
    <property type="match status" value="1"/>
</dbReference>
<dbReference type="Gene3D" id="1.10.10.1800">
    <property type="entry name" value="tRNA uridine 5-carboxymethylaminomethyl modification enzyme MnmG/GidA"/>
    <property type="match status" value="1"/>
</dbReference>
<dbReference type="HAMAP" id="MF_00129">
    <property type="entry name" value="MnmG_GidA"/>
    <property type="match status" value="1"/>
</dbReference>
<dbReference type="InterPro" id="IPR036188">
    <property type="entry name" value="FAD/NAD-bd_sf"/>
</dbReference>
<dbReference type="InterPro" id="IPR049312">
    <property type="entry name" value="GIDA_C_N"/>
</dbReference>
<dbReference type="InterPro" id="IPR004416">
    <property type="entry name" value="MnmG"/>
</dbReference>
<dbReference type="InterPro" id="IPR002218">
    <property type="entry name" value="MnmG-rel"/>
</dbReference>
<dbReference type="InterPro" id="IPR020595">
    <property type="entry name" value="MnmG-rel_CS"/>
</dbReference>
<dbReference type="InterPro" id="IPR026904">
    <property type="entry name" value="MnmG_C"/>
</dbReference>
<dbReference type="InterPro" id="IPR047001">
    <property type="entry name" value="MnmG_C_subdom"/>
</dbReference>
<dbReference type="InterPro" id="IPR044920">
    <property type="entry name" value="MnmG_C_subdom_sf"/>
</dbReference>
<dbReference type="InterPro" id="IPR040131">
    <property type="entry name" value="MnmG_N"/>
</dbReference>
<dbReference type="NCBIfam" id="TIGR00136">
    <property type="entry name" value="mnmG_gidA"/>
    <property type="match status" value="1"/>
</dbReference>
<dbReference type="PANTHER" id="PTHR11806">
    <property type="entry name" value="GLUCOSE INHIBITED DIVISION PROTEIN A"/>
    <property type="match status" value="1"/>
</dbReference>
<dbReference type="PANTHER" id="PTHR11806:SF0">
    <property type="entry name" value="PROTEIN MTO1 HOMOLOG, MITOCHONDRIAL"/>
    <property type="match status" value="1"/>
</dbReference>
<dbReference type="Pfam" id="PF01134">
    <property type="entry name" value="GIDA"/>
    <property type="match status" value="1"/>
</dbReference>
<dbReference type="Pfam" id="PF21680">
    <property type="entry name" value="GIDA_C_1st"/>
    <property type="match status" value="1"/>
</dbReference>
<dbReference type="Pfam" id="PF13932">
    <property type="entry name" value="SAM_GIDA_C"/>
    <property type="match status" value="1"/>
</dbReference>
<dbReference type="SMART" id="SM01228">
    <property type="entry name" value="GIDA_assoc_3"/>
    <property type="match status" value="1"/>
</dbReference>
<dbReference type="SUPFAM" id="SSF51905">
    <property type="entry name" value="FAD/NAD(P)-binding domain"/>
    <property type="match status" value="1"/>
</dbReference>
<dbReference type="PROSITE" id="PS01280">
    <property type="entry name" value="GIDA_1"/>
    <property type="match status" value="1"/>
</dbReference>
<dbReference type="PROSITE" id="PS01281">
    <property type="entry name" value="GIDA_2"/>
    <property type="match status" value="1"/>
</dbReference>
<feature type="chain" id="PRO_1000016679" description="tRNA uridine 5-carboxymethylaminomethyl modification enzyme MnmG">
    <location>
        <begin position="1"/>
        <end position="629"/>
    </location>
</feature>
<feature type="binding site" evidence="1">
    <location>
        <begin position="13"/>
        <end position="18"/>
    </location>
    <ligand>
        <name>FAD</name>
        <dbReference type="ChEBI" id="CHEBI:57692"/>
    </ligand>
</feature>
<feature type="binding site" evidence="1">
    <location>
        <position position="125"/>
    </location>
    <ligand>
        <name>FAD</name>
        <dbReference type="ChEBI" id="CHEBI:57692"/>
    </ligand>
</feature>
<feature type="binding site" evidence="1">
    <location>
        <position position="180"/>
    </location>
    <ligand>
        <name>FAD</name>
        <dbReference type="ChEBI" id="CHEBI:57692"/>
    </ligand>
</feature>
<feature type="binding site" evidence="1">
    <location>
        <begin position="273"/>
        <end position="287"/>
    </location>
    <ligand>
        <name>NAD(+)</name>
        <dbReference type="ChEBI" id="CHEBI:57540"/>
    </ligand>
</feature>
<feature type="binding site" evidence="1">
    <location>
        <position position="370"/>
    </location>
    <ligand>
        <name>FAD</name>
        <dbReference type="ChEBI" id="CHEBI:57692"/>
    </ligand>
</feature>
<proteinExistence type="inferred from homology"/>
<organism>
    <name type="scientific">Shigella boydii serotype 4 (strain Sb227)</name>
    <dbReference type="NCBI Taxonomy" id="300268"/>
    <lineage>
        <taxon>Bacteria</taxon>
        <taxon>Pseudomonadati</taxon>
        <taxon>Pseudomonadota</taxon>
        <taxon>Gammaproteobacteria</taxon>
        <taxon>Enterobacterales</taxon>
        <taxon>Enterobacteriaceae</taxon>
        <taxon>Shigella</taxon>
    </lineage>
</organism>